<accession>Q9XZS8</accession>
<accession>Q8MRE5</accession>
<gene>
    <name evidence="9" type="primary">Atf3</name>
    <name evidence="9" type="synonym">A3-3</name>
    <name evidence="9" type="ORF">CG11405</name>
</gene>
<dbReference type="EMBL" id="AE014298">
    <property type="protein sequence ID" value="AAF45599.1"/>
    <property type="molecule type" value="Genomic_DNA"/>
</dbReference>
<dbReference type="EMBL" id="AE014298">
    <property type="protein sequence ID" value="AHN59240.1"/>
    <property type="molecule type" value="Genomic_DNA"/>
</dbReference>
<dbReference type="EMBL" id="AL121806">
    <property type="protein sequence ID" value="CAB65887.1"/>
    <property type="molecule type" value="Genomic_DNA"/>
</dbReference>
<dbReference type="EMBL" id="AY121628">
    <property type="protein sequence ID" value="AAM51955.1"/>
    <property type="status" value="ALT_TERM"/>
    <property type="molecule type" value="mRNA"/>
</dbReference>
<dbReference type="RefSeq" id="NP_001284769.1">
    <property type="nucleotide sequence ID" value="NM_001297840.1"/>
</dbReference>
<dbReference type="RefSeq" id="NP_620473.1">
    <property type="nucleotide sequence ID" value="NM_138988.4"/>
</dbReference>
<dbReference type="SMR" id="Q9XZS8"/>
<dbReference type="FunCoup" id="Q9XZS8">
    <property type="interactions" value="144"/>
</dbReference>
<dbReference type="IntAct" id="Q9XZS8">
    <property type="interactions" value="3"/>
</dbReference>
<dbReference type="STRING" id="7227.FBpp0303417"/>
<dbReference type="PaxDb" id="7227-FBpp0070234"/>
<dbReference type="EnsemblMetazoa" id="FBtr0070244">
    <property type="protein sequence ID" value="FBpp0070234"/>
    <property type="gene ID" value="FBgn0028550"/>
</dbReference>
<dbReference type="EnsemblMetazoa" id="FBtr0345507">
    <property type="protein sequence ID" value="FBpp0311616"/>
    <property type="gene ID" value="FBgn0028550"/>
</dbReference>
<dbReference type="GeneID" id="43867"/>
<dbReference type="KEGG" id="dme:Dmel_CG11405"/>
<dbReference type="UCSC" id="CG11405-RA">
    <property type="organism name" value="d. melanogaster"/>
</dbReference>
<dbReference type="AGR" id="FB:FBgn0028550"/>
<dbReference type="CTD" id="467"/>
<dbReference type="FlyBase" id="FBgn0028550">
    <property type="gene designation" value="Atf3"/>
</dbReference>
<dbReference type="VEuPathDB" id="VectorBase:FBgn0028550"/>
<dbReference type="eggNOG" id="KOG1414">
    <property type="taxonomic scope" value="Eukaryota"/>
</dbReference>
<dbReference type="GeneTree" id="ENSGT00940000174029"/>
<dbReference type="HOGENOM" id="CLU_444301_0_0_1"/>
<dbReference type="InParanoid" id="Q9XZS8"/>
<dbReference type="OMA" id="MATFKFG"/>
<dbReference type="OrthoDB" id="2596881at2759"/>
<dbReference type="PhylomeDB" id="Q9XZS8"/>
<dbReference type="SignaLink" id="Q9XZS8"/>
<dbReference type="BioGRID-ORCS" id="43867">
    <property type="hits" value="0 hits in 3 CRISPR screens"/>
</dbReference>
<dbReference type="GenomeRNAi" id="43867"/>
<dbReference type="PRO" id="PR:Q9XZS8"/>
<dbReference type="Proteomes" id="UP000000803">
    <property type="component" value="Chromosome X"/>
</dbReference>
<dbReference type="Bgee" id="FBgn0028550">
    <property type="expression patterns" value="Expressed in adult Malpighian tubule principal cell of lower ureter in Malpighian tubule and 231 other cell types or tissues"/>
</dbReference>
<dbReference type="ExpressionAtlas" id="Q9XZS8">
    <property type="expression patterns" value="baseline and differential"/>
</dbReference>
<dbReference type="GO" id="GO:0005634">
    <property type="term" value="C:nucleus"/>
    <property type="evidence" value="ECO:0000314"/>
    <property type="project" value="FlyBase"/>
</dbReference>
<dbReference type="GO" id="GO:0000981">
    <property type="term" value="F:DNA-binding transcription factor activity, RNA polymerase II-specific"/>
    <property type="evidence" value="ECO:0000318"/>
    <property type="project" value="GO_Central"/>
</dbReference>
<dbReference type="GO" id="GO:0000978">
    <property type="term" value="F:RNA polymerase II cis-regulatory region sequence-specific DNA binding"/>
    <property type="evidence" value="ECO:0000318"/>
    <property type="project" value="GO_Central"/>
</dbReference>
<dbReference type="GO" id="GO:0043565">
    <property type="term" value="F:sequence-specific DNA binding"/>
    <property type="evidence" value="ECO:0000314"/>
    <property type="project" value="FlyBase"/>
</dbReference>
<dbReference type="GO" id="GO:0006955">
    <property type="term" value="P:immune response"/>
    <property type="evidence" value="ECO:0000315"/>
    <property type="project" value="FlyBase"/>
</dbReference>
<dbReference type="GO" id="GO:0055088">
    <property type="term" value="P:lipid homeostasis"/>
    <property type="evidence" value="ECO:0000315"/>
    <property type="project" value="FlyBase"/>
</dbReference>
<dbReference type="GO" id="GO:0010883">
    <property type="term" value="P:regulation of lipid storage"/>
    <property type="evidence" value="ECO:0000315"/>
    <property type="project" value="FlyBase"/>
</dbReference>
<dbReference type="GO" id="GO:0006357">
    <property type="term" value="P:regulation of transcription by RNA polymerase II"/>
    <property type="evidence" value="ECO:0000318"/>
    <property type="project" value="GO_Central"/>
</dbReference>
<dbReference type="CDD" id="cd14722">
    <property type="entry name" value="bZIP_ATF3"/>
    <property type="match status" value="1"/>
</dbReference>
<dbReference type="Gene3D" id="1.20.5.170">
    <property type="match status" value="1"/>
</dbReference>
<dbReference type="InterPro" id="IPR000837">
    <property type="entry name" value="AP-1"/>
</dbReference>
<dbReference type="InterPro" id="IPR004827">
    <property type="entry name" value="bZIP"/>
</dbReference>
<dbReference type="InterPro" id="IPR046347">
    <property type="entry name" value="bZIP_sf"/>
</dbReference>
<dbReference type="PANTHER" id="PTHR23351:SF24">
    <property type="entry name" value="ACTIVATING TRANSCRIPTION FACTOR 3-RELATED"/>
    <property type="match status" value="1"/>
</dbReference>
<dbReference type="PANTHER" id="PTHR23351">
    <property type="entry name" value="FOS TRANSCRIPTION FACTOR-RELATED"/>
    <property type="match status" value="1"/>
</dbReference>
<dbReference type="Pfam" id="PF00170">
    <property type="entry name" value="bZIP_1"/>
    <property type="match status" value="1"/>
</dbReference>
<dbReference type="PRINTS" id="PR00042">
    <property type="entry name" value="LEUZIPPRFOS"/>
</dbReference>
<dbReference type="SMART" id="SM00338">
    <property type="entry name" value="BRLZ"/>
    <property type="match status" value="1"/>
</dbReference>
<dbReference type="SUPFAM" id="SSF57959">
    <property type="entry name" value="Leucine zipper domain"/>
    <property type="match status" value="1"/>
</dbReference>
<dbReference type="PROSITE" id="PS50217">
    <property type="entry name" value="BZIP"/>
    <property type="match status" value="1"/>
</dbReference>
<dbReference type="PROSITE" id="PS00036">
    <property type="entry name" value="BZIP_BASIC"/>
    <property type="match status" value="1"/>
</dbReference>
<organism evidence="10">
    <name type="scientific">Drosophila melanogaster</name>
    <name type="common">Fruit fly</name>
    <dbReference type="NCBI Taxonomy" id="7227"/>
    <lineage>
        <taxon>Eukaryota</taxon>
        <taxon>Metazoa</taxon>
        <taxon>Ecdysozoa</taxon>
        <taxon>Arthropoda</taxon>
        <taxon>Hexapoda</taxon>
        <taxon>Insecta</taxon>
        <taxon>Pterygota</taxon>
        <taxon>Neoptera</taxon>
        <taxon>Endopterygota</taxon>
        <taxon>Diptera</taxon>
        <taxon>Brachycera</taxon>
        <taxon>Muscomorpha</taxon>
        <taxon>Ephydroidea</taxon>
        <taxon>Drosophilidae</taxon>
        <taxon>Drosophila</taxon>
        <taxon>Sophophora</taxon>
    </lineage>
</organism>
<sequence>MFNSNIPASSLLSIDSGGLLMGGHTPKTPEILNSLIAMTNPLENFSYSSAAAAAAAVSVASSSASCSAASTPVVTVRHFNGHPNGQSHSQDSSHSSCSGSPLDSPAGTATTPSVQQTCSRLIKEGLKLSIQSKRKLSTCDSSSGSEQPHSKYSRRSSNHNGHSGSSNNYSGSMSNANDLDDDCEESSDDDSETKSQPKGLTPEDEDRRRRRRERNKIAATKCRMKKRERTQNLIKESEVLDTQNVELKNQVRQLETERQKLVDMLKSHGCQRAGGCQLPSQLLQSPAQKYLSELELETVSIDGPNSGNNNQRLQSIPSMATFKYGSKTAAAMAQQLPNGYCKPSPSAQEFEHAGYQQQQQQQQQQQPQSLNPAGNNVIDQQHANPSPSLLSDYVPNCDGLTGSASNHPSHNNNNNNNNSSGASSNTSNNNSNISSHSSNATSSTTPTATSSAIEFVKNELVDSQSPYTTALSAERFLFEPSDGFPDIKHACVLPSPCGINGLNMASVVNTNGSTGNNNNSHHNNNNNNNNHLMDFHQGLQHGNIGTGVGVGVGVGVGVGVGVGVMTPYDDEQLLLLKNGCFATDLLSQLVEEGGEYVDLDSATAFMNNGSCLA</sequence>
<proteinExistence type="evidence at protein level"/>
<feature type="chain" id="PRO_0000436179" description="Activating transcription factor 3">
    <location>
        <begin position="1"/>
        <end position="613"/>
    </location>
</feature>
<feature type="domain" description="bZIP" evidence="1">
    <location>
        <begin position="205"/>
        <end position="268"/>
    </location>
</feature>
<feature type="region of interest" description="Disordered" evidence="2">
    <location>
        <begin position="77"/>
        <end position="115"/>
    </location>
</feature>
<feature type="region of interest" description="Disordered" evidence="2">
    <location>
        <begin position="133"/>
        <end position="218"/>
    </location>
</feature>
<feature type="region of interest" description="Basic motif" evidence="1">
    <location>
        <begin position="207"/>
        <end position="229"/>
    </location>
</feature>
<feature type="region of interest" description="Leucine-zipper" evidence="1">
    <location>
        <begin position="233"/>
        <end position="261"/>
    </location>
</feature>
<feature type="region of interest" description="Disordered" evidence="2">
    <location>
        <begin position="337"/>
        <end position="446"/>
    </location>
</feature>
<feature type="compositionally biased region" description="Low complexity" evidence="2">
    <location>
        <begin position="85"/>
        <end position="105"/>
    </location>
</feature>
<feature type="compositionally biased region" description="Polar residues" evidence="2">
    <location>
        <begin position="138"/>
        <end position="147"/>
    </location>
</feature>
<feature type="compositionally biased region" description="Low complexity" evidence="2">
    <location>
        <begin position="158"/>
        <end position="175"/>
    </location>
</feature>
<feature type="compositionally biased region" description="Acidic residues" evidence="2">
    <location>
        <begin position="178"/>
        <end position="191"/>
    </location>
</feature>
<feature type="compositionally biased region" description="Low complexity" evidence="2">
    <location>
        <begin position="356"/>
        <end position="368"/>
    </location>
</feature>
<feature type="compositionally biased region" description="Polar residues" evidence="2">
    <location>
        <begin position="369"/>
        <end position="389"/>
    </location>
</feature>
<feature type="compositionally biased region" description="Low complexity" evidence="2">
    <location>
        <begin position="402"/>
        <end position="446"/>
    </location>
</feature>
<name>ATF3_DROME</name>
<keyword id="KW-0238">DNA-binding</keyword>
<keyword id="KW-0539">Nucleus</keyword>
<keyword id="KW-1185">Reference proteome</keyword>
<keyword id="KW-0804">Transcription</keyword>
<keyword id="KW-0805">Transcription regulation</keyword>
<evidence type="ECO:0000255" key="1">
    <source>
        <dbReference type="PROSITE-ProRule" id="PRU00978"/>
    </source>
</evidence>
<evidence type="ECO:0000256" key="2">
    <source>
        <dbReference type="SAM" id="MobiDB-lite"/>
    </source>
</evidence>
<evidence type="ECO:0000269" key="3">
    <source>
    </source>
</evidence>
<evidence type="ECO:0000269" key="4">
    <source>
    </source>
</evidence>
<evidence type="ECO:0000269" key="5">
    <source>
    </source>
</evidence>
<evidence type="ECO:0000305" key="6"/>
<evidence type="ECO:0000312" key="7">
    <source>
        <dbReference type="EMBL" id="AAM51955.1"/>
    </source>
</evidence>
<evidence type="ECO:0000312" key="8">
    <source>
        <dbReference type="EMBL" id="CAB65887.1"/>
    </source>
</evidence>
<evidence type="ECO:0000312" key="9">
    <source>
        <dbReference type="FlyBase" id="FBgn0028550"/>
    </source>
</evidence>
<evidence type="ECO:0000312" key="10">
    <source>
        <dbReference type="Proteomes" id="UP000000803"/>
    </source>
</evidence>
<reference evidence="10" key="1">
    <citation type="journal article" date="2000" name="Science">
        <title>The genome sequence of Drosophila melanogaster.</title>
        <authorList>
            <person name="Adams M.D."/>
            <person name="Celniker S.E."/>
            <person name="Holt R.A."/>
            <person name="Evans C.A."/>
            <person name="Gocayne J.D."/>
            <person name="Amanatides P.G."/>
            <person name="Scherer S.E."/>
            <person name="Li P.W."/>
            <person name="Hoskins R.A."/>
            <person name="Galle R.F."/>
            <person name="George R.A."/>
            <person name="Lewis S.E."/>
            <person name="Richards S."/>
            <person name="Ashburner M."/>
            <person name="Henderson S.N."/>
            <person name="Sutton G.G."/>
            <person name="Wortman J.R."/>
            <person name="Yandell M.D."/>
            <person name="Zhang Q."/>
            <person name="Chen L.X."/>
            <person name="Brandon R.C."/>
            <person name="Rogers Y.-H.C."/>
            <person name="Blazej R.G."/>
            <person name="Champe M."/>
            <person name="Pfeiffer B.D."/>
            <person name="Wan K.H."/>
            <person name="Doyle C."/>
            <person name="Baxter E.G."/>
            <person name="Helt G."/>
            <person name="Nelson C.R."/>
            <person name="Miklos G.L.G."/>
            <person name="Abril J.F."/>
            <person name="Agbayani A."/>
            <person name="An H.-J."/>
            <person name="Andrews-Pfannkoch C."/>
            <person name="Baldwin D."/>
            <person name="Ballew R.M."/>
            <person name="Basu A."/>
            <person name="Baxendale J."/>
            <person name="Bayraktaroglu L."/>
            <person name="Beasley E.M."/>
            <person name="Beeson K.Y."/>
            <person name="Benos P.V."/>
            <person name="Berman B.P."/>
            <person name="Bhandari D."/>
            <person name="Bolshakov S."/>
            <person name="Borkova D."/>
            <person name="Botchan M.R."/>
            <person name="Bouck J."/>
            <person name="Brokstein P."/>
            <person name="Brottier P."/>
            <person name="Burtis K.C."/>
            <person name="Busam D.A."/>
            <person name="Butler H."/>
            <person name="Cadieu E."/>
            <person name="Center A."/>
            <person name="Chandra I."/>
            <person name="Cherry J.M."/>
            <person name="Cawley S."/>
            <person name="Dahlke C."/>
            <person name="Davenport L.B."/>
            <person name="Davies P."/>
            <person name="de Pablos B."/>
            <person name="Delcher A."/>
            <person name="Deng Z."/>
            <person name="Mays A.D."/>
            <person name="Dew I."/>
            <person name="Dietz S.M."/>
            <person name="Dodson K."/>
            <person name="Doup L.E."/>
            <person name="Downes M."/>
            <person name="Dugan-Rocha S."/>
            <person name="Dunkov B.C."/>
            <person name="Dunn P."/>
            <person name="Durbin K.J."/>
            <person name="Evangelista C.C."/>
            <person name="Ferraz C."/>
            <person name="Ferriera S."/>
            <person name="Fleischmann W."/>
            <person name="Fosler C."/>
            <person name="Gabrielian A.E."/>
            <person name="Garg N.S."/>
            <person name="Gelbart W.M."/>
            <person name="Glasser K."/>
            <person name="Glodek A."/>
            <person name="Gong F."/>
            <person name="Gorrell J.H."/>
            <person name="Gu Z."/>
            <person name="Guan P."/>
            <person name="Harris M."/>
            <person name="Harris N.L."/>
            <person name="Harvey D.A."/>
            <person name="Heiman T.J."/>
            <person name="Hernandez J.R."/>
            <person name="Houck J."/>
            <person name="Hostin D."/>
            <person name="Houston K.A."/>
            <person name="Howland T.J."/>
            <person name="Wei M.-H."/>
            <person name="Ibegwam C."/>
            <person name="Jalali M."/>
            <person name="Kalush F."/>
            <person name="Karpen G.H."/>
            <person name="Ke Z."/>
            <person name="Kennison J.A."/>
            <person name="Ketchum K.A."/>
            <person name="Kimmel B.E."/>
            <person name="Kodira C.D."/>
            <person name="Kraft C.L."/>
            <person name="Kravitz S."/>
            <person name="Kulp D."/>
            <person name="Lai Z."/>
            <person name="Lasko P."/>
            <person name="Lei Y."/>
            <person name="Levitsky A.A."/>
            <person name="Li J.H."/>
            <person name="Li Z."/>
            <person name="Liang Y."/>
            <person name="Lin X."/>
            <person name="Liu X."/>
            <person name="Mattei B."/>
            <person name="McIntosh T.C."/>
            <person name="McLeod M.P."/>
            <person name="McPherson D."/>
            <person name="Merkulov G."/>
            <person name="Milshina N.V."/>
            <person name="Mobarry C."/>
            <person name="Morris J."/>
            <person name="Moshrefi A."/>
            <person name="Mount S.M."/>
            <person name="Moy M."/>
            <person name="Murphy B."/>
            <person name="Murphy L."/>
            <person name="Muzny D.M."/>
            <person name="Nelson D.L."/>
            <person name="Nelson D.R."/>
            <person name="Nelson K.A."/>
            <person name="Nixon K."/>
            <person name="Nusskern D.R."/>
            <person name="Pacleb J.M."/>
            <person name="Palazzolo M."/>
            <person name="Pittman G.S."/>
            <person name="Pan S."/>
            <person name="Pollard J."/>
            <person name="Puri V."/>
            <person name="Reese M.G."/>
            <person name="Reinert K."/>
            <person name="Remington K."/>
            <person name="Saunders R.D.C."/>
            <person name="Scheeler F."/>
            <person name="Shen H."/>
            <person name="Shue B.C."/>
            <person name="Siden-Kiamos I."/>
            <person name="Simpson M."/>
            <person name="Skupski M.P."/>
            <person name="Smith T.J."/>
            <person name="Spier E."/>
            <person name="Spradling A.C."/>
            <person name="Stapleton M."/>
            <person name="Strong R."/>
            <person name="Sun E."/>
            <person name="Svirskas R."/>
            <person name="Tector C."/>
            <person name="Turner R."/>
            <person name="Venter E."/>
            <person name="Wang A.H."/>
            <person name="Wang X."/>
            <person name="Wang Z.-Y."/>
            <person name="Wassarman D.A."/>
            <person name="Weinstock G.M."/>
            <person name="Weissenbach J."/>
            <person name="Williams S.M."/>
            <person name="Woodage T."/>
            <person name="Worley K.C."/>
            <person name="Wu D."/>
            <person name="Yang S."/>
            <person name="Yao Q.A."/>
            <person name="Ye J."/>
            <person name="Yeh R.-F."/>
            <person name="Zaveri J.S."/>
            <person name="Zhan M."/>
            <person name="Zhang G."/>
            <person name="Zhao Q."/>
            <person name="Zheng L."/>
            <person name="Zheng X.H."/>
            <person name="Zhong F.N."/>
            <person name="Zhong W."/>
            <person name="Zhou X."/>
            <person name="Zhu S.C."/>
            <person name="Zhu X."/>
            <person name="Smith H.O."/>
            <person name="Gibbs R.A."/>
            <person name="Myers E.W."/>
            <person name="Rubin G.M."/>
            <person name="Venter J.C."/>
        </authorList>
    </citation>
    <scope>NUCLEOTIDE SEQUENCE [LARGE SCALE GENOMIC DNA]</scope>
    <source>
        <strain evidence="10">Berkeley</strain>
    </source>
</reference>
<reference evidence="10" key="2">
    <citation type="journal article" date="2002" name="Genome Biol.">
        <title>Annotation of the Drosophila melanogaster euchromatic genome: a systematic review.</title>
        <authorList>
            <person name="Misra S."/>
            <person name="Crosby M.A."/>
            <person name="Mungall C.J."/>
            <person name="Matthews B.B."/>
            <person name="Campbell K.S."/>
            <person name="Hradecky P."/>
            <person name="Huang Y."/>
            <person name="Kaminker J.S."/>
            <person name="Millburn G.H."/>
            <person name="Prochnik S.E."/>
            <person name="Smith C.D."/>
            <person name="Tupy J.L."/>
            <person name="Whitfield E.J."/>
            <person name="Bayraktaroglu L."/>
            <person name="Berman B.P."/>
            <person name="Bettencourt B.R."/>
            <person name="Celniker S.E."/>
            <person name="de Grey A.D.N.J."/>
            <person name="Drysdale R.A."/>
            <person name="Harris N.L."/>
            <person name="Richter J."/>
            <person name="Russo S."/>
            <person name="Schroeder A.J."/>
            <person name="Shu S.Q."/>
            <person name="Stapleton M."/>
            <person name="Yamada C."/>
            <person name="Ashburner M."/>
            <person name="Gelbart W.M."/>
            <person name="Rubin G.M."/>
            <person name="Lewis S.E."/>
        </authorList>
    </citation>
    <scope>GENOME REANNOTATION</scope>
    <source>
        <strain evidence="10">Berkeley</strain>
    </source>
</reference>
<reference evidence="8" key="3">
    <citation type="journal article" date="2000" name="Science">
        <title>From sequence to chromosome: the tip of the X chromosome of D. melanogaster.</title>
        <authorList>
            <person name="Benos P.V."/>
            <person name="Gatt M.K."/>
            <person name="Ashburner M."/>
            <person name="Murphy L."/>
            <person name="Harris D."/>
            <person name="Barrell B.G."/>
            <person name="Ferraz C."/>
            <person name="Vidal S."/>
            <person name="Brun C."/>
            <person name="Demailles J."/>
            <person name="Cadieu E."/>
            <person name="Dreano S."/>
            <person name="Gloux S."/>
            <person name="Lelaure V."/>
            <person name="Mottier S."/>
            <person name="Galibert F."/>
            <person name="Borkova D."/>
            <person name="Minana B."/>
            <person name="Kafatos F.C."/>
            <person name="Louis C."/>
            <person name="Siden-Kiamos I."/>
            <person name="Bolshakov S."/>
            <person name="Papagiannakis G."/>
            <person name="Spanos L."/>
            <person name="Cox S."/>
            <person name="Madueno E."/>
            <person name="de Pablos B."/>
            <person name="Modolell J."/>
            <person name="Peter A."/>
            <person name="Schoettler P."/>
            <person name="Werner M."/>
            <person name="Mourkioti F."/>
            <person name="Beinert N."/>
            <person name="Dowe G."/>
            <person name="Schaefer U."/>
            <person name="Jaeckle H."/>
            <person name="Bucheton A."/>
            <person name="Callister D.M."/>
            <person name="Campbell L.A."/>
            <person name="Darlamitsou A."/>
            <person name="Henderson N.S."/>
            <person name="McMillan P.J."/>
            <person name="Salles C."/>
            <person name="Tait E.A."/>
            <person name="Valenti P."/>
            <person name="Saunders R.D.C."/>
            <person name="Glover D.M."/>
        </authorList>
    </citation>
    <scope>NUCLEOTIDE SEQUENCE [LARGE SCALE GENOMIC DNA]</scope>
    <source>
        <strain evidence="8">Oregon-R</strain>
    </source>
</reference>
<reference evidence="7" key="4">
    <citation type="journal article" date="2002" name="Genome Biol.">
        <title>A Drosophila full-length cDNA resource.</title>
        <authorList>
            <person name="Stapleton M."/>
            <person name="Carlson J.W."/>
            <person name="Brokstein P."/>
            <person name="Yu C."/>
            <person name="Champe M."/>
            <person name="George R.A."/>
            <person name="Guarin H."/>
            <person name="Kronmiller B."/>
            <person name="Pacleb J.M."/>
            <person name="Park S."/>
            <person name="Wan K.H."/>
            <person name="Rubin G.M."/>
            <person name="Celniker S.E."/>
        </authorList>
    </citation>
    <scope>NUCLEOTIDE SEQUENCE [LARGE SCALE MRNA]</scope>
    <source>
        <strain evidence="7">Berkeley</strain>
        <tissue evidence="7">Head</tissue>
    </source>
</reference>
<reference evidence="6" key="5">
    <citation type="journal article" date="2010" name="Development">
        <title>Interaction between Drosophila bZIP proteins Atf3 and Jun prevents replacement of epithelial cells during metamorphosis.</title>
        <authorList>
            <person name="Sekyrova P."/>
            <person name="Bohmann D."/>
            <person name="Jindra M."/>
            <person name="Uhlirova M."/>
        </authorList>
    </citation>
    <scope>FUNCTION</scope>
    <scope>INTERACTION WITH JRA</scope>
    <scope>DEVELOPMENTAL STAGE</scope>
    <scope>DISRUPTION PHENOTYPE</scope>
</reference>
<reference evidence="6" key="6">
    <citation type="journal article" date="2012" name="Mol. Cell. Biol.">
        <title>Activating transcription factor 3 regulates immune and metabolic homeostasis.</title>
        <authorList>
            <person name="Rynes J."/>
            <person name="Donohoe C.D."/>
            <person name="Frommolt P."/>
            <person name="Brodesser S."/>
            <person name="Jindra M."/>
            <person name="Uhlirova M."/>
        </authorList>
    </citation>
    <scope>FUNCTION</scope>
    <scope>SUBCELLULAR LOCATION</scope>
    <scope>TISSUE SPECIFICITY</scope>
    <scope>DISRUPTION PHENOTYPE</scope>
</reference>
<reference evidence="6" key="7">
    <citation type="journal article" date="2016" name="Sci. Rep.">
        <title>An accelerated miRNA-based screen implicates Atf-3 in Drosophila odorant receptor expression.</title>
        <authorList>
            <person name="Bhat S."/>
            <person name="Jones W.D."/>
        </authorList>
    </citation>
    <scope>FUNCTION</scope>
</reference>
<protein>
    <recommendedName>
        <fullName evidence="9">Activating transcription factor 3</fullName>
    </recommendedName>
</protein>
<comment type="function">
    <text evidence="3 4 5">Transcription factor which binds to the cAMP response element (CRE) (PubMed:20023169). Regulates metabolic and innate immune homeostasis, possibly by controlling appropriate expression of genes involved in peritrophic matrix composition and ensuring the normal digestive and immune function of the gut (PubMed:22851689). Required for the expression of odorant receptors Or43b and Or47b (PubMed:26848073).</text>
</comment>
<comment type="subunit">
    <text evidence="3">Interacts with Jra/jun; the interaction enhances the DNA-binding activity of Atf3.</text>
</comment>
<comment type="subcellular location">
    <subcellularLocation>
        <location evidence="4">Nucleus</location>
    </subcellularLocation>
</comment>
<comment type="tissue specificity">
    <text evidence="4">Moderate expression in some regions of the larval nervous system, the ring gland and imaginal disks. High expression in larval gut, excretory malpighian tubules, salivary glands, and, to a lesser extent, the fat body where levels are approximately 2.5-fold less than the gut.</text>
</comment>
<comment type="developmental stage">
    <text evidence="3">Expressed in embryo and larva with a sharp decline by the late third instar larval stage. Expression peaks 6 hours after puparium formation, drops and remains low until the second day of pupal development and then grows steadily during adult morphogenesis.</text>
</comment>
<comment type="disruption phenotype">
    <text evidence="3 4">Mutants die soon after hatching and during all three larval stages with only 2% reaching the third instar larval stage and these die before metamorphosis (PubMed:20023169). Altered expression levels of a number of genes in third instar larvae and chronic inflammation and starvation responses in the larval gut epithelium with a predominance of extremely large lipid droplets and obesity but not hyperglycemia (PubMed:22851689).</text>
</comment>
<comment type="similarity">
    <text evidence="6">Belongs to the bZIP family. ATF subfamily.</text>
</comment>
<comment type="sequence caution" evidence="6">
    <conflict type="erroneous termination">
        <sequence resource="EMBL-CDS" id="AAM51955"/>
    </conflict>
    <text>Truncated C-terminus.</text>
</comment>